<sequence>MVAKILDGKQIAKEYRQRLKNQVNDLKEYGFTPKLSVILVGNDGASQSYVKSKKKAAEKIGMISEIIHLDESTSEEVVLSELNRLNNDDTVSGILVQVPLPKQVSEQKVLEAINPEKDVDGFHPINIGKLYIDEQTFVPCTPLGIMEILKHADINLEGKNAVVIGRSHIVGQPVSKLLLQANATVTILHSRTKNMNAHLKQADVIVSAVGQPGLVTKENVKKGAVIIDVGNTPDENGKLKGDVAYDEVKEIASAITPVPGGVGPLTITMVLNNTLLAEKLRRGLTK</sequence>
<name>FOLD_STAES</name>
<reference key="1">
    <citation type="journal article" date="2003" name="Mol. Microbiol.">
        <title>Genome-based analysis of virulence genes in a non-biofilm-forming Staphylococcus epidermidis strain (ATCC 12228).</title>
        <authorList>
            <person name="Zhang Y.-Q."/>
            <person name="Ren S.-X."/>
            <person name="Li H.-L."/>
            <person name="Wang Y.-X."/>
            <person name="Fu G."/>
            <person name="Yang J."/>
            <person name="Qin Z.-Q."/>
            <person name="Miao Y.-G."/>
            <person name="Wang W.-Y."/>
            <person name="Chen R.-S."/>
            <person name="Shen Y."/>
            <person name="Chen Z."/>
            <person name="Yuan Z.-H."/>
            <person name="Zhao G.-P."/>
            <person name="Qu D."/>
            <person name="Danchin A."/>
            <person name="Wen Y.-M."/>
        </authorList>
    </citation>
    <scope>NUCLEOTIDE SEQUENCE [LARGE SCALE GENOMIC DNA]</scope>
    <source>
        <strain>ATCC 12228 / FDA PCI 1200</strain>
    </source>
</reference>
<protein>
    <recommendedName>
        <fullName evidence="1">Bifunctional protein FolD</fullName>
    </recommendedName>
    <domain>
        <recommendedName>
            <fullName evidence="1">Methylenetetrahydrofolate dehydrogenase</fullName>
            <ecNumber evidence="1">1.5.1.5</ecNumber>
        </recommendedName>
    </domain>
    <domain>
        <recommendedName>
            <fullName evidence="1">Methenyltetrahydrofolate cyclohydrolase</fullName>
            <ecNumber evidence="1">3.5.4.9</ecNumber>
        </recommendedName>
    </domain>
</protein>
<organism>
    <name type="scientific">Staphylococcus epidermidis (strain ATCC 12228 / FDA PCI 1200)</name>
    <dbReference type="NCBI Taxonomy" id="176280"/>
    <lineage>
        <taxon>Bacteria</taxon>
        <taxon>Bacillati</taxon>
        <taxon>Bacillota</taxon>
        <taxon>Bacilli</taxon>
        <taxon>Bacillales</taxon>
        <taxon>Staphylococcaceae</taxon>
        <taxon>Staphylococcus</taxon>
    </lineage>
</organism>
<dbReference type="EC" id="1.5.1.5" evidence="1"/>
<dbReference type="EC" id="3.5.4.9" evidence="1"/>
<dbReference type="EMBL" id="AE015929">
    <property type="protein sequence ID" value="AAO04358.1"/>
    <property type="molecule type" value="Genomic_DNA"/>
</dbReference>
<dbReference type="RefSeq" id="NP_764316.1">
    <property type="nucleotide sequence ID" value="NC_004461.1"/>
</dbReference>
<dbReference type="RefSeq" id="WP_001831669.1">
    <property type="nucleotide sequence ID" value="NZ_WBME01000028.1"/>
</dbReference>
<dbReference type="SMR" id="Q8CPP4"/>
<dbReference type="KEGG" id="sep:SE_0761"/>
<dbReference type="PATRIC" id="fig|176280.10.peg.733"/>
<dbReference type="eggNOG" id="COG0190">
    <property type="taxonomic scope" value="Bacteria"/>
</dbReference>
<dbReference type="HOGENOM" id="CLU_034045_2_1_9"/>
<dbReference type="OrthoDB" id="9803580at2"/>
<dbReference type="UniPathway" id="UPA00193"/>
<dbReference type="Proteomes" id="UP000001411">
    <property type="component" value="Chromosome"/>
</dbReference>
<dbReference type="GO" id="GO:0005829">
    <property type="term" value="C:cytosol"/>
    <property type="evidence" value="ECO:0007669"/>
    <property type="project" value="TreeGrafter"/>
</dbReference>
<dbReference type="GO" id="GO:0004477">
    <property type="term" value="F:methenyltetrahydrofolate cyclohydrolase activity"/>
    <property type="evidence" value="ECO:0007669"/>
    <property type="project" value="UniProtKB-UniRule"/>
</dbReference>
<dbReference type="GO" id="GO:0004488">
    <property type="term" value="F:methylenetetrahydrofolate dehydrogenase (NADP+) activity"/>
    <property type="evidence" value="ECO:0007669"/>
    <property type="project" value="UniProtKB-UniRule"/>
</dbReference>
<dbReference type="GO" id="GO:0000105">
    <property type="term" value="P:L-histidine biosynthetic process"/>
    <property type="evidence" value="ECO:0007669"/>
    <property type="project" value="UniProtKB-KW"/>
</dbReference>
<dbReference type="GO" id="GO:0009086">
    <property type="term" value="P:methionine biosynthetic process"/>
    <property type="evidence" value="ECO:0007669"/>
    <property type="project" value="UniProtKB-KW"/>
</dbReference>
<dbReference type="GO" id="GO:0006164">
    <property type="term" value="P:purine nucleotide biosynthetic process"/>
    <property type="evidence" value="ECO:0007669"/>
    <property type="project" value="UniProtKB-KW"/>
</dbReference>
<dbReference type="GO" id="GO:0035999">
    <property type="term" value="P:tetrahydrofolate interconversion"/>
    <property type="evidence" value="ECO:0007669"/>
    <property type="project" value="UniProtKB-UniRule"/>
</dbReference>
<dbReference type="CDD" id="cd01080">
    <property type="entry name" value="NAD_bind_m-THF_DH_Cyclohyd"/>
    <property type="match status" value="1"/>
</dbReference>
<dbReference type="FunFam" id="3.40.50.720:FF:000094">
    <property type="entry name" value="Bifunctional protein FolD"/>
    <property type="match status" value="1"/>
</dbReference>
<dbReference type="FunFam" id="3.40.50.10860:FF:000005">
    <property type="entry name" value="C-1-tetrahydrofolate synthase, cytoplasmic, putative"/>
    <property type="match status" value="1"/>
</dbReference>
<dbReference type="Gene3D" id="3.40.50.10860">
    <property type="entry name" value="Leucine Dehydrogenase, chain A, domain 1"/>
    <property type="match status" value="1"/>
</dbReference>
<dbReference type="Gene3D" id="3.40.50.720">
    <property type="entry name" value="NAD(P)-binding Rossmann-like Domain"/>
    <property type="match status" value="1"/>
</dbReference>
<dbReference type="HAMAP" id="MF_01576">
    <property type="entry name" value="THF_DHG_CYH"/>
    <property type="match status" value="1"/>
</dbReference>
<dbReference type="InterPro" id="IPR046346">
    <property type="entry name" value="Aminoacid_DH-like_N_sf"/>
</dbReference>
<dbReference type="InterPro" id="IPR036291">
    <property type="entry name" value="NAD(P)-bd_dom_sf"/>
</dbReference>
<dbReference type="InterPro" id="IPR000672">
    <property type="entry name" value="THF_DH/CycHdrlase"/>
</dbReference>
<dbReference type="InterPro" id="IPR020630">
    <property type="entry name" value="THF_DH/CycHdrlase_cat_dom"/>
</dbReference>
<dbReference type="InterPro" id="IPR020631">
    <property type="entry name" value="THF_DH/CycHdrlase_NAD-bd_dom"/>
</dbReference>
<dbReference type="NCBIfam" id="NF010772">
    <property type="entry name" value="PRK14175.1"/>
    <property type="match status" value="1"/>
</dbReference>
<dbReference type="NCBIfam" id="NF010783">
    <property type="entry name" value="PRK14186.1"/>
    <property type="match status" value="1"/>
</dbReference>
<dbReference type="PANTHER" id="PTHR48099:SF5">
    <property type="entry name" value="C-1-TETRAHYDROFOLATE SYNTHASE, CYTOPLASMIC"/>
    <property type="match status" value="1"/>
</dbReference>
<dbReference type="PANTHER" id="PTHR48099">
    <property type="entry name" value="C-1-TETRAHYDROFOLATE SYNTHASE, CYTOPLASMIC-RELATED"/>
    <property type="match status" value="1"/>
</dbReference>
<dbReference type="Pfam" id="PF00763">
    <property type="entry name" value="THF_DHG_CYH"/>
    <property type="match status" value="1"/>
</dbReference>
<dbReference type="Pfam" id="PF02882">
    <property type="entry name" value="THF_DHG_CYH_C"/>
    <property type="match status" value="1"/>
</dbReference>
<dbReference type="PRINTS" id="PR00085">
    <property type="entry name" value="THFDHDRGNASE"/>
</dbReference>
<dbReference type="SUPFAM" id="SSF53223">
    <property type="entry name" value="Aminoacid dehydrogenase-like, N-terminal domain"/>
    <property type="match status" value="1"/>
</dbReference>
<dbReference type="SUPFAM" id="SSF51735">
    <property type="entry name" value="NAD(P)-binding Rossmann-fold domains"/>
    <property type="match status" value="1"/>
</dbReference>
<proteinExistence type="inferred from homology"/>
<gene>
    <name evidence="1" type="primary">folD</name>
    <name type="ordered locus">SE_0761</name>
</gene>
<comment type="function">
    <text evidence="1">Catalyzes the oxidation of 5,10-methylenetetrahydrofolate to 5,10-methenyltetrahydrofolate and then the hydrolysis of 5,10-methenyltetrahydrofolate to 10-formyltetrahydrofolate.</text>
</comment>
<comment type="catalytic activity">
    <reaction evidence="1">
        <text>(6R)-5,10-methylene-5,6,7,8-tetrahydrofolate + NADP(+) = (6R)-5,10-methenyltetrahydrofolate + NADPH</text>
        <dbReference type="Rhea" id="RHEA:22812"/>
        <dbReference type="ChEBI" id="CHEBI:15636"/>
        <dbReference type="ChEBI" id="CHEBI:57455"/>
        <dbReference type="ChEBI" id="CHEBI:57783"/>
        <dbReference type="ChEBI" id="CHEBI:58349"/>
        <dbReference type="EC" id="1.5.1.5"/>
    </reaction>
</comment>
<comment type="catalytic activity">
    <reaction evidence="1">
        <text>(6R)-5,10-methenyltetrahydrofolate + H2O = (6R)-10-formyltetrahydrofolate + H(+)</text>
        <dbReference type="Rhea" id="RHEA:23700"/>
        <dbReference type="ChEBI" id="CHEBI:15377"/>
        <dbReference type="ChEBI" id="CHEBI:15378"/>
        <dbReference type="ChEBI" id="CHEBI:57455"/>
        <dbReference type="ChEBI" id="CHEBI:195366"/>
        <dbReference type="EC" id="3.5.4.9"/>
    </reaction>
</comment>
<comment type="pathway">
    <text evidence="1">One-carbon metabolism; tetrahydrofolate interconversion.</text>
</comment>
<comment type="subunit">
    <text evidence="1">Homodimer.</text>
</comment>
<comment type="similarity">
    <text evidence="1">Belongs to the tetrahydrofolate dehydrogenase/cyclohydrolase family.</text>
</comment>
<evidence type="ECO:0000255" key="1">
    <source>
        <dbReference type="HAMAP-Rule" id="MF_01576"/>
    </source>
</evidence>
<accession>Q8CPP4</accession>
<keyword id="KW-0028">Amino-acid biosynthesis</keyword>
<keyword id="KW-0368">Histidine biosynthesis</keyword>
<keyword id="KW-0378">Hydrolase</keyword>
<keyword id="KW-0486">Methionine biosynthesis</keyword>
<keyword id="KW-0511">Multifunctional enzyme</keyword>
<keyword id="KW-0521">NADP</keyword>
<keyword id="KW-0554">One-carbon metabolism</keyword>
<keyword id="KW-0560">Oxidoreductase</keyword>
<keyword id="KW-0658">Purine biosynthesis</keyword>
<feature type="chain" id="PRO_0000265952" description="Bifunctional protein FolD">
    <location>
        <begin position="1"/>
        <end position="286"/>
    </location>
</feature>
<feature type="binding site" evidence="1">
    <location>
        <begin position="165"/>
        <end position="167"/>
    </location>
    <ligand>
        <name>NADP(+)</name>
        <dbReference type="ChEBI" id="CHEBI:58349"/>
    </ligand>
</feature>
<feature type="binding site" evidence="1">
    <location>
        <position position="190"/>
    </location>
    <ligand>
        <name>NADP(+)</name>
        <dbReference type="ChEBI" id="CHEBI:58349"/>
    </ligand>
</feature>